<organism>
    <name type="scientific">Escherichia coli O45:K1 (strain S88 / ExPEC)</name>
    <dbReference type="NCBI Taxonomy" id="585035"/>
    <lineage>
        <taxon>Bacteria</taxon>
        <taxon>Pseudomonadati</taxon>
        <taxon>Pseudomonadota</taxon>
        <taxon>Gammaproteobacteria</taxon>
        <taxon>Enterobacterales</taxon>
        <taxon>Enterobacteriaceae</taxon>
        <taxon>Escherichia</taxon>
    </lineage>
</organism>
<dbReference type="EMBL" id="CU928161">
    <property type="protein sequence ID" value="CAR04920.1"/>
    <property type="molecule type" value="Genomic_DNA"/>
</dbReference>
<dbReference type="RefSeq" id="WP_001138117.1">
    <property type="nucleotide sequence ID" value="NC_011742.1"/>
</dbReference>
<dbReference type="EMDB" id="EMD-7014"/>
<dbReference type="EMDB" id="EMD-7015"/>
<dbReference type="EMDB" id="EMD-7016"/>
<dbReference type="EMDB" id="EMD-7341"/>
<dbReference type="EMDB" id="EMD-7970"/>
<dbReference type="EMDB" id="EMD-8621"/>
<dbReference type="EMDB" id="EMD-8826"/>
<dbReference type="EMDB" id="EMD-8829"/>
<dbReference type="SMR" id="B7MCT1"/>
<dbReference type="IntAct" id="B7MCT1">
    <property type="interactions" value="1"/>
</dbReference>
<dbReference type="GeneID" id="98390438"/>
<dbReference type="KEGG" id="ecz:ECS88_3703"/>
<dbReference type="HOGENOM" id="CLU_144911_0_1_6"/>
<dbReference type="Proteomes" id="UP000000747">
    <property type="component" value="Chromosome"/>
</dbReference>
<dbReference type="GO" id="GO:0005737">
    <property type="term" value="C:cytoplasm"/>
    <property type="evidence" value="ECO:0007669"/>
    <property type="project" value="UniProtKB-ARBA"/>
</dbReference>
<dbReference type="GO" id="GO:0015935">
    <property type="term" value="C:small ribosomal subunit"/>
    <property type="evidence" value="ECO:0007669"/>
    <property type="project" value="InterPro"/>
</dbReference>
<dbReference type="GO" id="GO:0019843">
    <property type="term" value="F:rRNA binding"/>
    <property type="evidence" value="ECO:0007669"/>
    <property type="project" value="UniProtKB-UniRule"/>
</dbReference>
<dbReference type="GO" id="GO:0003735">
    <property type="term" value="F:structural constituent of ribosome"/>
    <property type="evidence" value="ECO:0007669"/>
    <property type="project" value="InterPro"/>
</dbReference>
<dbReference type="GO" id="GO:0000028">
    <property type="term" value="P:ribosomal small subunit assembly"/>
    <property type="evidence" value="ECO:0007669"/>
    <property type="project" value="TreeGrafter"/>
</dbReference>
<dbReference type="GO" id="GO:0006412">
    <property type="term" value="P:translation"/>
    <property type="evidence" value="ECO:0007669"/>
    <property type="project" value="UniProtKB-UniRule"/>
</dbReference>
<dbReference type="FunFam" id="3.30.860.10:FF:000001">
    <property type="entry name" value="30S ribosomal protein S19"/>
    <property type="match status" value="1"/>
</dbReference>
<dbReference type="Gene3D" id="3.30.860.10">
    <property type="entry name" value="30s Ribosomal Protein S19, Chain A"/>
    <property type="match status" value="1"/>
</dbReference>
<dbReference type="HAMAP" id="MF_00531">
    <property type="entry name" value="Ribosomal_uS19"/>
    <property type="match status" value="1"/>
</dbReference>
<dbReference type="InterPro" id="IPR002222">
    <property type="entry name" value="Ribosomal_uS19"/>
</dbReference>
<dbReference type="InterPro" id="IPR005732">
    <property type="entry name" value="Ribosomal_uS19_bac-type"/>
</dbReference>
<dbReference type="InterPro" id="IPR020934">
    <property type="entry name" value="Ribosomal_uS19_CS"/>
</dbReference>
<dbReference type="InterPro" id="IPR023575">
    <property type="entry name" value="Ribosomal_uS19_SF"/>
</dbReference>
<dbReference type="NCBIfam" id="TIGR01050">
    <property type="entry name" value="rpsS_bact"/>
    <property type="match status" value="1"/>
</dbReference>
<dbReference type="PANTHER" id="PTHR11880">
    <property type="entry name" value="RIBOSOMAL PROTEIN S19P FAMILY MEMBER"/>
    <property type="match status" value="1"/>
</dbReference>
<dbReference type="PANTHER" id="PTHR11880:SF8">
    <property type="entry name" value="SMALL RIBOSOMAL SUBUNIT PROTEIN US19M"/>
    <property type="match status" value="1"/>
</dbReference>
<dbReference type="Pfam" id="PF00203">
    <property type="entry name" value="Ribosomal_S19"/>
    <property type="match status" value="1"/>
</dbReference>
<dbReference type="PIRSF" id="PIRSF002144">
    <property type="entry name" value="Ribosomal_S19"/>
    <property type="match status" value="1"/>
</dbReference>
<dbReference type="PRINTS" id="PR00975">
    <property type="entry name" value="RIBOSOMALS19"/>
</dbReference>
<dbReference type="SUPFAM" id="SSF54570">
    <property type="entry name" value="Ribosomal protein S19"/>
    <property type="match status" value="1"/>
</dbReference>
<dbReference type="PROSITE" id="PS00323">
    <property type="entry name" value="RIBOSOMAL_S19"/>
    <property type="match status" value="1"/>
</dbReference>
<protein>
    <recommendedName>
        <fullName evidence="1">Small ribosomal subunit protein uS19</fullName>
    </recommendedName>
    <alternativeName>
        <fullName evidence="2">30S ribosomal protein S19</fullName>
    </alternativeName>
</protein>
<sequence>MPRSLKKGPFIDLHLLKKVEKAVESGDKKPLRTWSRRSTIFPNMIGLTIAVHNGRQHVPVFVTDEMVGHKLGEFAPTRTYRGHAADKKAKKK</sequence>
<name>RS19_ECO45</name>
<proteinExistence type="inferred from homology"/>
<reference key="1">
    <citation type="journal article" date="2009" name="PLoS Genet.">
        <title>Organised genome dynamics in the Escherichia coli species results in highly diverse adaptive paths.</title>
        <authorList>
            <person name="Touchon M."/>
            <person name="Hoede C."/>
            <person name="Tenaillon O."/>
            <person name="Barbe V."/>
            <person name="Baeriswyl S."/>
            <person name="Bidet P."/>
            <person name="Bingen E."/>
            <person name="Bonacorsi S."/>
            <person name="Bouchier C."/>
            <person name="Bouvet O."/>
            <person name="Calteau A."/>
            <person name="Chiapello H."/>
            <person name="Clermont O."/>
            <person name="Cruveiller S."/>
            <person name="Danchin A."/>
            <person name="Diard M."/>
            <person name="Dossat C."/>
            <person name="Karoui M.E."/>
            <person name="Frapy E."/>
            <person name="Garry L."/>
            <person name="Ghigo J.M."/>
            <person name="Gilles A.M."/>
            <person name="Johnson J."/>
            <person name="Le Bouguenec C."/>
            <person name="Lescat M."/>
            <person name="Mangenot S."/>
            <person name="Martinez-Jehanne V."/>
            <person name="Matic I."/>
            <person name="Nassif X."/>
            <person name="Oztas S."/>
            <person name="Petit M.A."/>
            <person name="Pichon C."/>
            <person name="Rouy Z."/>
            <person name="Ruf C.S."/>
            <person name="Schneider D."/>
            <person name="Tourret J."/>
            <person name="Vacherie B."/>
            <person name="Vallenet D."/>
            <person name="Medigue C."/>
            <person name="Rocha E.P.C."/>
            <person name="Denamur E."/>
        </authorList>
    </citation>
    <scope>NUCLEOTIDE SEQUENCE [LARGE SCALE GENOMIC DNA]</scope>
    <source>
        <strain>S88 / ExPEC</strain>
    </source>
</reference>
<accession>B7MCT1</accession>
<keyword id="KW-1185">Reference proteome</keyword>
<keyword id="KW-0687">Ribonucleoprotein</keyword>
<keyword id="KW-0689">Ribosomal protein</keyword>
<keyword id="KW-0694">RNA-binding</keyword>
<keyword id="KW-0699">rRNA-binding</keyword>
<gene>
    <name evidence="1" type="primary">rpsS</name>
    <name type="ordered locus">ECS88_3703</name>
</gene>
<comment type="function">
    <text evidence="1">Protein S19 forms a complex with S13 that binds strongly to the 16S ribosomal RNA.</text>
</comment>
<comment type="similarity">
    <text evidence="1">Belongs to the universal ribosomal protein uS19 family.</text>
</comment>
<feature type="chain" id="PRO_1000127968" description="Small ribosomal subunit protein uS19">
    <location>
        <begin position="1"/>
        <end position="92"/>
    </location>
</feature>
<evidence type="ECO:0000255" key="1">
    <source>
        <dbReference type="HAMAP-Rule" id="MF_00531"/>
    </source>
</evidence>
<evidence type="ECO:0000305" key="2"/>